<protein>
    <recommendedName>
        <fullName>Myb-related protein 340</fullName>
    </recommendedName>
</protein>
<dbReference type="PIR" id="JQ0959">
    <property type="entry name" value="JQ0959"/>
</dbReference>
<dbReference type="SMR" id="P81396"/>
<dbReference type="GO" id="GO:0005634">
    <property type="term" value="C:nucleus"/>
    <property type="evidence" value="ECO:0007669"/>
    <property type="project" value="UniProtKB-SubCell"/>
</dbReference>
<dbReference type="GO" id="GO:0003700">
    <property type="term" value="F:DNA-binding transcription factor activity"/>
    <property type="evidence" value="ECO:0007669"/>
    <property type="project" value="InterPro"/>
</dbReference>
<dbReference type="GO" id="GO:0043565">
    <property type="term" value="F:sequence-specific DNA binding"/>
    <property type="evidence" value="ECO:0007669"/>
    <property type="project" value="InterPro"/>
</dbReference>
<dbReference type="CDD" id="cd00167">
    <property type="entry name" value="SANT"/>
    <property type="match status" value="2"/>
</dbReference>
<dbReference type="FunFam" id="1.10.10.60:FF:000011">
    <property type="entry name" value="Myb transcription factor"/>
    <property type="match status" value="1"/>
</dbReference>
<dbReference type="FunFam" id="1.10.10.60:FF:000358">
    <property type="entry name" value="Myb-related protein 305"/>
    <property type="match status" value="1"/>
</dbReference>
<dbReference type="Gene3D" id="1.10.10.60">
    <property type="entry name" value="Homeodomain-like"/>
    <property type="match status" value="2"/>
</dbReference>
<dbReference type="InterPro" id="IPR044676">
    <property type="entry name" value="EOBI/EOBII-like_plant"/>
</dbReference>
<dbReference type="InterPro" id="IPR009057">
    <property type="entry name" value="Homeodomain-like_sf"/>
</dbReference>
<dbReference type="InterPro" id="IPR017930">
    <property type="entry name" value="Myb_dom"/>
</dbReference>
<dbReference type="InterPro" id="IPR001005">
    <property type="entry name" value="SANT/Myb"/>
</dbReference>
<dbReference type="PANTHER" id="PTHR45675">
    <property type="entry name" value="MYB TRANSCRIPTION FACTOR-RELATED-RELATED"/>
    <property type="match status" value="1"/>
</dbReference>
<dbReference type="PANTHER" id="PTHR45675:SF44">
    <property type="entry name" value="TRANSCRIPTION FACTOR MYB24"/>
    <property type="match status" value="1"/>
</dbReference>
<dbReference type="Pfam" id="PF00249">
    <property type="entry name" value="Myb_DNA-binding"/>
    <property type="match status" value="2"/>
</dbReference>
<dbReference type="SMART" id="SM00717">
    <property type="entry name" value="SANT"/>
    <property type="match status" value="2"/>
</dbReference>
<dbReference type="SUPFAM" id="SSF46689">
    <property type="entry name" value="Homeodomain-like"/>
    <property type="match status" value="1"/>
</dbReference>
<dbReference type="PROSITE" id="PS51294">
    <property type="entry name" value="HTH_MYB"/>
    <property type="match status" value="2"/>
</dbReference>
<sequence>MDKKPCNSHDVEVRKGPWTMEEDLILINFISNHGEGVWNTIARSAGLKRTGKSCRLRWLNYLRPDVRRGNITPEEQLLIMELHAKWGNRWSKIAKHLPGRTDNEIKNYWNRTRIQKHIKQAEASFIGHINPEHSNEQASTSLLSSSCHADHAVESYSSSFNGNMGNNVQYPNHFPTESNDYFWSMEDLWSMQLPNNGG</sequence>
<organism>
    <name type="scientific">Antirrhinum majus</name>
    <name type="common">Garden snapdragon</name>
    <dbReference type="NCBI Taxonomy" id="4151"/>
    <lineage>
        <taxon>Eukaryota</taxon>
        <taxon>Viridiplantae</taxon>
        <taxon>Streptophyta</taxon>
        <taxon>Embryophyta</taxon>
        <taxon>Tracheophyta</taxon>
        <taxon>Spermatophyta</taxon>
        <taxon>Magnoliopsida</taxon>
        <taxon>eudicotyledons</taxon>
        <taxon>Gunneridae</taxon>
        <taxon>Pentapetalae</taxon>
        <taxon>asterids</taxon>
        <taxon>lamiids</taxon>
        <taxon>Lamiales</taxon>
        <taxon>Plantaginaceae</taxon>
        <taxon>Antirrhineae</taxon>
        <taxon>Antirrhinum</taxon>
    </lineage>
</organism>
<evidence type="ECO:0000250" key="1">
    <source>
        <dbReference type="UniProtKB" id="Q9LX82"/>
    </source>
</evidence>
<evidence type="ECO:0000255" key="2">
    <source>
        <dbReference type="PROSITE-ProRule" id="PRU00625"/>
    </source>
</evidence>
<evidence type="ECO:0000269" key="3">
    <source>
    </source>
</evidence>
<evidence type="ECO:0000303" key="4">
    <source>
    </source>
</evidence>
<evidence type="ECO:0000305" key="5"/>
<reference evidence="5" key="1">
    <citation type="journal article" date="1991" name="Plant Cell">
        <title>Expression patterns of myb genes from Antirrhinum flowers.</title>
        <authorList>
            <person name="Jackson D."/>
            <person name="Culianez-Macia F."/>
            <person name="Prescott A.G."/>
            <person name="Roberts K."/>
            <person name="Martin C."/>
        </authorList>
    </citation>
    <scope>NUCLEOTIDE SEQUENCE [MRNA]</scope>
    <scope>TISSUE SPECIFICITY</scope>
    <scope>DEVELOPMENTAL STAGE</scope>
    <source>
        <strain evidence="3">cv. JI:522</strain>
        <tissue evidence="3">Flower bud</tissue>
    </source>
</reference>
<name>MYB40_ANTMA</name>
<gene>
    <name evidence="4" type="primary">MYB340</name>
</gene>
<feature type="chain" id="PRO_0000291263" description="Myb-related protein 340">
    <location>
        <begin position="1"/>
        <end position="198"/>
    </location>
</feature>
<feature type="domain" description="HTH myb-type 1" evidence="2">
    <location>
        <begin position="10"/>
        <end position="62"/>
    </location>
</feature>
<feature type="domain" description="HTH myb-type 2" evidence="2">
    <location>
        <begin position="63"/>
        <end position="117"/>
    </location>
</feature>
<feature type="DNA-binding region" description="H-T-H motif" evidence="2">
    <location>
        <begin position="38"/>
        <end position="62"/>
    </location>
</feature>
<feature type="DNA-binding region" description="H-T-H motif" evidence="2">
    <location>
        <begin position="90"/>
        <end position="113"/>
    </location>
</feature>
<keyword id="KW-0238">DNA-binding</keyword>
<keyword id="KW-0539">Nucleus</keyword>
<keyword id="KW-0677">Repeat</keyword>
<keyword id="KW-0804">Transcription</keyword>
<keyword id="KW-0805">Transcription regulation</keyword>
<proteinExistence type="evidence at transcript level"/>
<accession>P81396</accession>
<comment type="function">
    <text evidence="5">Transcription factor.</text>
</comment>
<comment type="subcellular location">
    <subcellularLocation>
        <location evidence="1 2">Nucleus</location>
    </subcellularLocation>
</comment>
<comment type="tissue specificity">
    <text evidence="3">Expressed only in flowers.</text>
</comment>
<comment type="developmental stage">
    <text evidence="3">Expression in flowers increases as the flowers develop.</text>
</comment>